<dbReference type="EMBL" id="J02482">
    <property type="protein sequence ID" value="AAA32577.1"/>
    <property type="molecule type" value="Genomic_DNA"/>
</dbReference>
<dbReference type="PIR" id="E93185">
    <property type="entry name" value="ZJBPF4"/>
</dbReference>
<dbReference type="PDB" id="1RB8">
    <property type="method" value="X-ray"/>
    <property type="resolution" value="3.50 A"/>
    <property type="chains" value="J=2-38"/>
</dbReference>
<dbReference type="PDB" id="2BPA">
    <property type="method" value="X-ray"/>
    <property type="resolution" value="3.00 A"/>
    <property type="chains" value="3=2-38"/>
</dbReference>
<dbReference type="PDBsum" id="1RB8"/>
<dbReference type="PDBsum" id="2BPA"/>
<dbReference type="SMR" id="P69592"/>
<dbReference type="DIP" id="DIP-61254N"/>
<dbReference type="IntAct" id="P69592">
    <property type="interactions" value="1"/>
</dbReference>
<dbReference type="KEGG" id="vg:2546404"/>
<dbReference type="EvolutionaryTrace" id="P69592"/>
<dbReference type="Proteomes" id="UP000005893">
    <property type="component" value="Segment"/>
</dbReference>
<dbReference type="GO" id="GO:0030430">
    <property type="term" value="C:host cell cytoplasm"/>
    <property type="evidence" value="ECO:0007669"/>
    <property type="project" value="UniProtKB-SubCell"/>
</dbReference>
<dbReference type="GO" id="GO:0019028">
    <property type="term" value="C:viral capsid"/>
    <property type="evidence" value="ECO:0007669"/>
    <property type="project" value="UniProtKB-KW"/>
</dbReference>
<dbReference type="GO" id="GO:0003677">
    <property type="term" value="F:DNA binding"/>
    <property type="evidence" value="ECO:0007669"/>
    <property type="project" value="UniProtKB-KW"/>
</dbReference>
<dbReference type="InterPro" id="IPR006815">
    <property type="entry name" value="Microvir_J-like"/>
</dbReference>
<dbReference type="Pfam" id="PF04726">
    <property type="entry name" value="Microvir_J"/>
    <property type="match status" value="1"/>
</dbReference>
<reference key="1">
    <citation type="journal article" date="1977" name="Nature">
        <title>Nucleotide sequence of bacteriophage phi X174 DNA.</title>
        <authorList>
            <person name="Sanger F."/>
            <person name="Air G.M."/>
            <person name="Barrell B.G."/>
            <person name="Brown N.L."/>
            <person name="Coulson A.R."/>
            <person name="Fiddes J.C."/>
            <person name="Hutchison C.A. III"/>
            <person name="Slocombe P.M."/>
            <person name="Smith M."/>
        </authorList>
    </citation>
    <scope>NUCLEOTIDE SEQUENCE [GENOMIC DNA]</scope>
</reference>
<reference key="2">
    <citation type="journal article" date="1977" name="Biochemistry">
        <title>Amino acid sequence of the small core protein from bacteriophage phiX174.</title>
        <authorList>
            <person name="Freymeyer D.K. II"/>
            <person name="Shank P.R."/>
            <person name="Edgell M.H."/>
            <person name="Hutchison C.A. III"/>
            <person name="Vanaman T.C."/>
        </authorList>
    </citation>
    <scope>PROTEIN SEQUENCE OF 2-38</scope>
</reference>
<reference key="3">
    <citation type="journal article" date="1997" name="Nature">
        <title>Structure of a viral procapsid with molecular scaffolding.</title>
        <authorList>
            <person name="Dokland T."/>
            <person name="McKenna R."/>
            <person name="Ilag L.L."/>
            <person name="Bowman B.R."/>
            <person name="Incardona N.L."/>
            <person name="Fane B.A."/>
            <person name="Rossmann M.G."/>
        </authorList>
    </citation>
    <scope>FUNCTION</scope>
</reference>
<reference key="4">
    <citation type="journal article" date="1992" name="Nature">
        <title>Atomic structure of single-stranded DNA bacteriophage phi X174 and its functional implications.</title>
        <authorList>
            <person name="McKenna R."/>
            <person name="Xia D."/>
            <person name="Williangmann P."/>
            <person name="Ilag L.L."/>
            <person name="Krishnaswamy S."/>
            <person name="Rossmann M.G."/>
            <person name="Olson N.H."/>
            <person name="Baker T.S."/>
            <person name="Incardona N.L."/>
        </authorList>
    </citation>
    <scope>CRYSTALLIZATION</scope>
</reference>
<reference key="5">
    <citation type="journal article" date="1994" name="J. Mol. Biol.">
        <title>Analysis of the single-stranded DNA bacteriophage phi X174, refined at a resolution of 3.0 A.</title>
        <authorList>
            <person name="McKenna R."/>
            <person name="Ilag L.L."/>
            <person name="Rossmann M.G."/>
        </authorList>
    </citation>
    <scope>X-RAY CRYSTALLOGRAPHY (3.0 ANGSTROMS)</scope>
</reference>
<reference key="6">
    <citation type="journal article" date="2002" name="J. Mol. Biol.">
        <title>Hydrophobic interactions at the Ccap position of the C-capping motif of alpha-helices.</title>
        <authorList>
            <person name="Ermolenko D.N."/>
            <person name="Thomas S.T."/>
            <person name="Aurora R."/>
            <person name="Gronenborn A.M."/>
            <person name="Makhatadze G.I."/>
        </authorList>
    </citation>
    <scope>X-RAY CRYSTALLOGRAPHY (3.0 ANGSTROMS)</scope>
</reference>
<reference key="7">
    <citation type="journal article" date="2004" name="J. Mol. Biol.">
        <title>The phiX174 protein J mediates DNA packaging and viral attachment to host cells.</title>
        <authorList>
            <person name="Bernal R.A."/>
            <person name="Hafenstein S."/>
            <person name="Esmeralda R."/>
            <person name="Fane B.A."/>
            <person name="Rossmann M.G."/>
        </authorList>
    </citation>
    <scope>X-RAY CRYSTALLOGRAPHY (3.5 ANGSTROMS)</scope>
    <scope>INTERACTION WITH F PROTEIN</scope>
    <scope>FUNCTION</scope>
    <scope>SUBCELLULAR LOCATION</scope>
</reference>
<name>J_BPPHS</name>
<evidence type="ECO:0000256" key="1">
    <source>
        <dbReference type="SAM" id="MobiDB-lite"/>
    </source>
</evidence>
<evidence type="ECO:0000269" key="2">
    <source>
    </source>
</evidence>
<evidence type="ECO:0000269" key="3">
    <source>
    </source>
</evidence>
<evidence type="ECO:0000269" key="4">
    <source>
    </source>
</evidence>
<evidence type="ECO:0000305" key="5"/>
<evidence type="ECO:0007829" key="6">
    <source>
        <dbReference type="PDB" id="2BPA"/>
    </source>
</evidence>
<protein>
    <recommendedName>
        <fullName>DNA-binding protein J</fullName>
    </recommendedName>
    <alternativeName>
        <fullName>J protein</fullName>
    </alternativeName>
    <alternativeName>
        <fullName>Small core protein</fullName>
    </alternativeName>
</protein>
<organismHost>
    <name type="scientific">Escherichia coli C</name>
    <dbReference type="NCBI Taxonomy" id="498388"/>
</organismHost>
<gene>
    <name type="primary">J</name>
</gene>
<comment type="function">
    <text evidence="2 4">Mediates ssDNA packaging into virion, it locates to the internal surface of the capsid, thereby displacing the internal scaffolding protein B during virion formation (PubMed:9305849). Protein J binds to and is packaged with the viral ssDNA (PubMed:9305849). Additionally, protein J plays a role in viral attachment efficiency to the host cell (PubMed:15046981).</text>
</comment>
<comment type="subunit">
    <text evidence="2">Interacts with F protein.</text>
</comment>
<comment type="subcellular location">
    <subcellularLocation>
        <location evidence="2">Virion</location>
    </subcellularLocation>
    <subcellularLocation>
        <location evidence="5">Host cytoplasm</location>
    </subcellularLocation>
    <text evidence="2">situated at the interface between the internal surface of the capsid and the nucleic acid.</text>
</comment>
<comment type="similarity">
    <text evidence="5">Belongs to the microviridae J protein family.</text>
</comment>
<accession>P69592</accession>
<accession>P03651</accession>
<sequence length="38" mass="4227">MSKGKKRSGARPGRPQPLRGTKGKRKGARLWYVGGQQF</sequence>
<organism>
    <name type="scientific">Enterobacteria phage phiX174</name>
    <name type="common">Isolate Sanger</name>
    <name type="synonym">Bacteriophage phi-X174</name>
    <dbReference type="NCBI Taxonomy" id="1217068"/>
    <lineage>
        <taxon>Viruses</taxon>
        <taxon>Monodnaviria</taxon>
        <taxon>Sangervirae</taxon>
        <taxon>Phixviricota</taxon>
        <taxon>Malgrandaviricetes</taxon>
        <taxon>Petitvirales</taxon>
        <taxon>Microviridae</taxon>
        <taxon>Bullavirinae</taxon>
        <taxon>Sinsheimervirus</taxon>
        <taxon>Escherichia phage phiX174</taxon>
    </lineage>
</organism>
<feature type="initiator methionine" description="Removed; by host" evidence="3">
    <location>
        <position position="1"/>
    </location>
</feature>
<feature type="chain" id="PRO_0000164907" description="DNA-binding protein J">
    <location>
        <begin position="2"/>
        <end position="38"/>
    </location>
</feature>
<feature type="region of interest" description="Disordered" evidence="1">
    <location>
        <begin position="1"/>
        <end position="38"/>
    </location>
</feature>
<feature type="strand" evidence="6">
    <location>
        <begin position="33"/>
        <end position="35"/>
    </location>
</feature>
<keyword id="KW-0002">3D-structure</keyword>
<keyword id="KW-0167">Capsid protein</keyword>
<keyword id="KW-0903">Direct protein sequencing</keyword>
<keyword id="KW-0238">DNA-binding</keyword>
<keyword id="KW-1035">Host cytoplasm</keyword>
<keyword id="KW-1185">Reference proteome</keyword>
<keyword id="KW-0231">Viral genome packaging</keyword>
<keyword id="KW-1188">Viral release from host cell</keyword>
<keyword id="KW-0946">Virion</keyword>
<proteinExistence type="evidence at protein level"/>